<proteinExistence type="inferred from homology"/>
<gene>
    <name evidence="1" type="primary">guaA</name>
    <name type="ordered locus">Ecaj_0074</name>
</gene>
<evidence type="ECO:0000255" key="1">
    <source>
        <dbReference type="HAMAP-Rule" id="MF_00344"/>
    </source>
</evidence>
<feature type="chain" id="PRO_0000229425" description="GMP synthase [glutamine-hydrolyzing]">
    <location>
        <begin position="1"/>
        <end position="526"/>
    </location>
</feature>
<feature type="domain" description="Glutamine amidotransferase type-1" evidence="1">
    <location>
        <begin position="3"/>
        <end position="199"/>
    </location>
</feature>
<feature type="domain" description="GMPS ATP-PPase" evidence="1">
    <location>
        <begin position="200"/>
        <end position="392"/>
    </location>
</feature>
<feature type="active site" description="Nucleophile" evidence="1">
    <location>
        <position position="83"/>
    </location>
</feature>
<feature type="active site" evidence="1">
    <location>
        <position position="174"/>
    </location>
</feature>
<feature type="active site" evidence="1">
    <location>
        <position position="176"/>
    </location>
</feature>
<feature type="binding site" evidence="1">
    <location>
        <begin position="227"/>
        <end position="233"/>
    </location>
    <ligand>
        <name>ATP</name>
        <dbReference type="ChEBI" id="CHEBI:30616"/>
    </ligand>
</feature>
<reference key="1">
    <citation type="journal article" date="2006" name="J. Bacteriol.">
        <title>The genome of the obligately intracellular bacterium Ehrlichia canis reveals themes of complex membrane structure and immune evasion strategies.</title>
        <authorList>
            <person name="Mavromatis K."/>
            <person name="Doyle C.K."/>
            <person name="Lykidis A."/>
            <person name="Ivanova N."/>
            <person name="Francino M.P."/>
            <person name="Chain P."/>
            <person name="Shin M."/>
            <person name="Malfatti S."/>
            <person name="Larimer F."/>
            <person name="Copeland A."/>
            <person name="Detter J.C."/>
            <person name="Land M."/>
            <person name="Richardson P.M."/>
            <person name="Yu X.J."/>
            <person name="Walker D.H."/>
            <person name="McBride J.W."/>
            <person name="Kyrpides N.C."/>
        </authorList>
    </citation>
    <scope>NUCLEOTIDE SEQUENCE [LARGE SCALE GENOMIC DNA]</scope>
    <source>
        <strain>Jake</strain>
    </source>
</reference>
<name>GUAA_EHRCJ</name>
<dbReference type="EC" id="6.3.5.2" evidence="1"/>
<dbReference type="EMBL" id="CP000107">
    <property type="protein sequence ID" value="AAZ68125.1"/>
    <property type="molecule type" value="Genomic_DNA"/>
</dbReference>
<dbReference type="RefSeq" id="WP_011304203.1">
    <property type="nucleotide sequence ID" value="NC_007354.1"/>
</dbReference>
<dbReference type="SMR" id="Q3YT30"/>
<dbReference type="FunCoup" id="Q3YT30">
    <property type="interactions" value="317"/>
</dbReference>
<dbReference type="STRING" id="269484.Ecaj_0074"/>
<dbReference type="KEGG" id="ecn:Ecaj_0074"/>
<dbReference type="eggNOG" id="COG0519">
    <property type="taxonomic scope" value="Bacteria"/>
</dbReference>
<dbReference type="HOGENOM" id="CLU_014340_0_5_5"/>
<dbReference type="InParanoid" id="Q3YT30"/>
<dbReference type="UniPathway" id="UPA00189">
    <property type="reaction ID" value="UER00296"/>
</dbReference>
<dbReference type="Proteomes" id="UP000000435">
    <property type="component" value="Chromosome"/>
</dbReference>
<dbReference type="GO" id="GO:0005829">
    <property type="term" value="C:cytosol"/>
    <property type="evidence" value="ECO:0007669"/>
    <property type="project" value="TreeGrafter"/>
</dbReference>
<dbReference type="GO" id="GO:0005524">
    <property type="term" value="F:ATP binding"/>
    <property type="evidence" value="ECO:0007669"/>
    <property type="project" value="UniProtKB-UniRule"/>
</dbReference>
<dbReference type="GO" id="GO:0003921">
    <property type="term" value="F:GMP synthase activity"/>
    <property type="evidence" value="ECO:0007669"/>
    <property type="project" value="InterPro"/>
</dbReference>
<dbReference type="CDD" id="cd01742">
    <property type="entry name" value="GATase1_GMP_Synthase"/>
    <property type="match status" value="1"/>
</dbReference>
<dbReference type="CDD" id="cd01997">
    <property type="entry name" value="GMP_synthase_C"/>
    <property type="match status" value="1"/>
</dbReference>
<dbReference type="FunFam" id="3.30.300.10:FF:000002">
    <property type="entry name" value="GMP synthase [glutamine-hydrolyzing]"/>
    <property type="match status" value="1"/>
</dbReference>
<dbReference type="FunFam" id="3.40.50.620:FF:000001">
    <property type="entry name" value="GMP synthase [glutamine-hydrolyzing]"/>
    <property type="match status" value="1"/>
</dbReference>
<dbReference type="Gene3D" id="3.30.300.10">
    <property type="match status" value="1"/>
</dbReference>
<dbReference type="Gene3D" id="3.40.50.880">
    <property type="match status" value="1"/>
</dbReference>
<dbReference type="Gene3D" id="3.40.50.620">
    <property type="entry name" value="HUPs"/>
    <property type="match status" value="1"/>
</dbReference>
<dbReference type="HAMAP" id="MF_00344">
    <property type="entry name" value="GMP_synthase"/>
    <property type="match status" value="1"/>
</dbReference>
<dbReference type="InterPro" id="IPR029062">
    <property type="entry name" value="Class_I_gatase-like"/>
</dbReference>
<dbReference type="InterPro" id="IPR017926">
    <property type="entry name" value="GATASE"/>
</dbReference>
<dbReference type="InterPro" id="IPR001674">
    <property type="entry name" value="GMP_synth_C"/>
</dbReference>
<dbReference type="InterPro" id="IPR004739">
    <property type="entry name" value="GMP_synth_GATase"/>
</dbReference>
<dbReference type="InterPro" id="IPR022955">
    <property type="entry name" value="GMP_synthase"/>
</dbReference>
<dbReference type="InterPro" id="IPR025777">
    <property type="entry name" value="GMPS_ATP_PPase_dom"/>
</dbReference>
<dbReference type="InterPro" id="IPR022310">
    <property type="entry name" value="NAD/GMP_synthase"/>
</dbReference>
<dbReference type="InterPro" id="IPR014729">
    <property type="entry name" value="Rossmann-like_a/b/a_fold"/>
</dbReference>
<dbReference type="NCBIfam" id="TIGR00884">
    <property type="entry name" value="guaA_Cterm"/>
    <property type="match status" value="1"/>
</dbReference>
<dbReference type="NCBIfam" id="TIGR00888">
    <property type="entry name" value="guaA_Nterm"/>
    <property type="match status" value="1"/>
</dbReference>
<dbReference type="NCBIfam" id="NF000848">
    <property type="entry name" value="PRK00074.1"/>
    <property type="match status" value="1"/>
</dbReference>
<dbReference type="PANTHER" id="PTHR11922:SF2">
    <property type="entry name" value="GMP SYNTHASE [GLUTAMINE-HYDROLYZING]"/>
    <property type="match status" value="1"/>
</dbReference>
<dbReference type="PANTHER" id="PTHR11922">
    <property type="entry name" value="GMP SYNTHASE-RELATED"/>
    <property type="match status" value="1"/>
</dbReference>
<dbReference type="Pfam" id="PF00117">
    <property type="entry name" value="GATase"/>
    <property type="match status" value="1"/>
</dbReference>
<dbReference type="Pfam" id="PF00958">
    <property type="entry name" value="GMP_synt_C"/>
    <property type="match status" value="1"/>
</dbReference>
<dbReference type="Pfam" id="PF02540">
    <property type="entry name" value="NAD_synthase"/>
    <property type="match status" value="1"/>
</dbReference>
<dbReference type="PRINTS" id="PR00097">
    <property type="entry name" value="ANTSNTHASEII"/>
</dbReference>
<dbReference type="PRINTS" id="PR00096">
    <property type="entry name" value="GATASE"/>
</dbReference>
<dbReference type="SUPFAM" id="SSF52402">
    <property type="entry name" value="Adenine nucleotide alpha hydrolases-like"/>
    <property type="match status" value="1"/>
</dbReference>
<dbReference type="SUPFAM" id="SSF52317">
    <property type="entry name" value="Class I glutamine amidotransferase-like"/>
    <property type="match status" value="1"/>
</dbReference>
<dbReference type="SUPFAM" id="SSF54810">
    <property type="entry name" value="GMP synthetase C-terminal dimerisation domain"/>
    <property type="match status" value="1"/>
</dbReference>
<dbReference type="PROSITE" id="PS51273">
    <property type="entry name" value="GATASE_TYPE_1"/>
    <property type="match status" value="1"/>
</dbReference>
<dbReference type="PROSITE" id="PS51553">
    <property type="entry name" value="GMPS_ATP_PPASE"/>
    <property type="match status" value="1"/>
</dbReference>
<sequence>MSKVAIIDFGSQFTQLLARRIRELNVYCEIFTPDVEFDLVKDSKAFILSGGPKSVASLAEIPKIVHNIIELNKKSSIPVLGICYGLQLLSNYFNSAIVSDCSKEFGKATLNIIKESEITKNVWEVGKRVDVWMSHADSVYNVPRGFEVIAYSVLKNVIAMICNEERKIYGMQFHPEVYHTTDGIALLSNFIKIAGCKTDWTMNSFLDEQQRVIKKQVGDKKVIAAISGGVDSSVAAALTYRAIGDQLHCIFIDNGLLRYNEAEKISQLLVNQFQMPITIVDKSSVFLNKLKSITDPEQKRKIIGKTFIEVFEGEANKIGGVEFLMQGTIYPDVIESGGAVGKESVTIKSHHNVGGLPDVMRLQLVEPLKLLFKDEVRLLGKELGISDEILMRHPFPGPGLAIRIIGEVTQEKIKMLQAADDIYINLIKKYNLYNIIWQAFAVILPVKTVGVMGDSRTYGYTCALRAVTSSDGMTAGCFPFGVDTDTKLIFYEFLQEVSNAIVNNVDGINRVVYDTTSKPPATIEWE</sequence>
<keyword id="KW-0067">ATP-binding</keyword>
<keyword id="KW-0315">Glutamine amidotransferase</keyword>
<keyword id="KW-0332">GMP biosynthesis</keyword>
<keyword id="KW-0436">Ligase</keyword>
<keyword id="KW-0547">Nucleotide-binding</keyword>
<keyword id="KW-0658">Purine biosynthesis</keyword>
<protein>
    <recommendedName>
        <fullName evidence="1">GMP synthase [glutamine-hydrolyzing]</fullName>
        <ecNumber evidence="1">6.3.5.2</ecNumber>
    </recommendedName>
    <alternativeName>
        <fullName evidence="1">GMP synthetase</fullName>
    </alternativeName>
    <alternativeName>
        <fullName evidence="1">Glutamine amidotransferase</fullName>
    </alternativeName>
</protein>
<organism>
    <name type="scientific">Ehrlichia canis (strain Jake)</name>
    <dbReference type="NCBI Taxonomy" id="269484"/>
    <lineage>
        <taxon>Bacteria</taxon>
        <taxon>Pseudomonadati</taxon>
        <taxon>Pseudomonadota</taxon>
        <taxon>Alphaproteobacteria</taxon>
        <taxon>Rickettsiales</taxon>
        <taxon>Anaplasmataceae</taxon>
        <taxon>Ehrlichia</taxon>
    </lineage>
</organism>
<accession>Q3YT30</accession>
<comment type="function">
    <text evidence="1">Catalyzes the synthesis of GMP from XMP.</text>
</comment>
<comment type="catalytic activity">
    <reaction evidence="1">
        <text>XMP + L-glutamine + ATP + H2O = GMP + L-glutamate + AMP + diphosphate + 2 H(+)</text>
        <dbReference type="Rhea" id="RHEA:11680"/>
        <dbReference type="ChEBI" id="CHEBI:15377"/>
        <dbReference type="ChEBI" id="CHEBI:15378"/>
        <dbReference type="ChEBI" id="CHEBI:29985"/>
        <dbReference type="ChEBI" id="CHEBI:30616"/>
        <dbReference type="ChEBI" id="CHEBI:33019"/>
        <dbReference type="ChEBI" id="CHEBI:57464"/>
        <dbReference type="ChEBI" id="CHEBI:58115"/>
        <dbReference type="ChEBI" id="CHEBI:58359"/>
        <dbReference type="ChEBI" id="CHEBI:456215"/>
        <dbReference type="EC" id="6.3.5.2"/>
    </reaction>
</comment>
<comment type="pathway">
    <text evidence="1">Purine metabolism; GMP biosynthesis; GMP from XMP (L-Gln route): step 1/1.</text>
</comment>
<comment type="subunit">
    <text evidence="1">Homodimer.</text>
</comment>